<sequence>MFAEIQIQDKDRMGTAGKVIKCKAAVLWEQKQPFSIEEIEVAPPKTKEVRIKILATGICRTDDHVIKGTMVSKFPVIVGHEATGIVESIGEGVTTVKPGDKVIPLFLPQCRECNACRNPDGNLCIRSDITGRGVLADGTTRFTCKGKPVHHFMNTSTFTEYTVVDESSVAKIDDAAPPEKVCLIGCGFSTGYGAAVKTGKVKPGSTCVVFGLGGVGLSVIMGCKSAGASRIIGIDLNKDKFEKAMAVGATECISPKDSTKPISEVLSEMTGNNVGYTFEVIGHLETMIDALASCHMNYGTSVVVGVPPSAKMLTYDPMLLFTGRTWKGCVFGGLKSRDDVPKLVTEFLAKKFDLDQLITHVLPFKKISEGFELLNSGQSIRTVLTF</sequence>
<comment type="function">
    <text evidence="2 3 4">Catalyzes the NAD-dependent oxidation of all-trans-retinol, alcohol, and omega-hydroxy fatty acids and their derivatives (PubMed:15369820, PubMed:16787387, PubMed:9600267). Oxidizes preferentially all trans-retinol, all-trans-4-hydroxyretinol, 9-cis-retinol, 2-hexenol, and long chain omega-hydroxy fatty acids such as juniperic acid (PubMed:15369820, PubMed:16787387, PubMed:9600267). In vitro can also catalyze the NADH-dependent reduction of all-trans-retinal and aldehydes and their derivatives (PubMed:15369820, PubMed:16787387, PubMed:9600267). Reduces preferentially all trans-retinal, all-trans-4-oxoretinal and hexanal (PubMed:15369820, PubMed:16787387). Catalyzes in the oxidative direction with higher efficiency (PubMed:15369820, PubMed:16787387). Therefore may participate in retinoid metabolism, fatty acid omega-oxidation, and elimination of cytotoxic aldehydes produced by lipid peroxidation (PubMed:15369820, PubMed:16787387, PubMed:9600267).</text>
</comment>
<comment type="catalytic activity">
    <reaction evidence="4">
        <text>a primary alcohol + NAD(+) = an aldehyde + NADH + H(+)</text>
        <dbReference type="Rhea" id="RHEA:10736"/>
        <dbReference type="ChEBI" id="CHEBI:15378"/>
        <dbReference type="ChEBI" id="CHEBI:15734"/>
        <dbReference type="ChEBI" id="CHEBI:17478"/>
        <dbReference type="ChEBI" id="CHEBI:57540"/>
        <dbReference type="ChEBI" id="CHEBI:57945"/>
        <dbReference type="EC" id="1.1.1.1"/>
    </reaction>
    <physiologicalReaction direction="left-to-right" evidence="9">
        <dbReference type="Rhea" id="RHEA:10737"/>
    </physiologicalReaction>
    <physiologicalReaction direction="right-to-left" evidence="9">
        <dbReference type="Rhea" id="RHEA:10738"/>
    </physiologicalReaction>
</comment>
<comment type="catalytic activity">
    <reaction evidence="4">
        <text>10-hydroxydecanoate + NAD(+) = 10-oxodecanoate + NADH + H(+)</text>
        <dbReference type="Rhea" id="RHEA:20880"/>
        <dbReference type="ChEBI" id="CHEBI:11305"/>
        <dbReference type="ChEBI" id="CHEBI:15378"/>
        <dbReference type="ChEBI" id="CHEBI:57540"/>
        <dbReference type="ChEBI" id="CHEBI:57945"/>
        <dbReference type="ChEBI" id="CHEBI:58022"/>
        <dbReference type="EC" id="1.1.1.66"/>
    </reaction>
    <physiologicalReaction direction="left-to-right" evidence="9">
        <dbReference type="Rhea" id="RHEA:20881"/>
    </physiologicalReaction>
</comment>
<comment type="catalytic activity">
    <reaction evidence="2 3 4">
        <text>all-trans-retinol + NAD(+) = all-trans-retinal + NADH + H(+)</text>
        <dbReference type="Rhea" id="RHEA:21284"/>
        <dbReference type="ChEBI" id="CHEBI:15378"/>
        <dbReference type="ChEBI" id="CHEBI:17336"/>
        <dbReference type="ChEBI" id="CHEBI:17898"/>
        <dbReference type="ChEBI" id="CHEBI:57540"/>
        <dbReference type="ChEBI" id="CHEBI:57945"/>
        <dbReference type="EC" id="1.1.1.105"/>
    </reaction>
    <physiologicalReaction direction="left-to-right" evidence="8">
        <dbReference type="Rhea" id="RHEA:21285"/>
    </physiologicalReaction>
</comment>
<comment type="catalytic activity">
    <reaction evidence="4">
        <text>9-cis-retinol + NAD(+) = 9-cis-retinal + NADH + H(+)</text>
        <dbReference type="Rhea" id="RHEA:42052"/>
        <dbReference type="ChEBI" id="CHEBI:15378"/>
        <dbReference type="ChEBI" id="CHEBI:57540"/>
        <dbReference type="ChEBI" id="CHEBI:57945"/>
        <dbReference type="ChEBI" id="CHEBI:78272"/>
        <dbReference type="ChEBI" id="CHEBI:78273"/>
    </reaction>
    <physiologicalReaction direction="left-to-right" evidence="9">
        <dbReference type="Rhea" id="RHEA:42053"/>
    </physiologicalReaction>
</comment>
<comment type="catalytic activity">
    <reaction evidence="2">
        <text>all-trans-3,4-didehydroretinol + NAD(+) = all-trans-3,4-didehydroretinal + NADH + H(+)</text>
        <dbReference type="Rhea" id="RHEA:55940"/>
        <dbReference type="ChEBI" id="CHEBI:15378"/>
        <dbReference type="ChEBI" id="CHEBI:28537"/>
        <dbReference type="ChEBI" id="CHEBI:57540"/>
        <dbReference type="ChEBI" id="CHEBI:57945"/>
        <dbReference type="ChEBI" id="CHEBI:132246"/>
    </reaction>
    <physiologicalReaction direction="left-to-right" evidence="7">
        <dbReference type="Rhea" id="RHEA:55941"/>
    </physiologicalReaction>
</comment>
<comment type="catalytic activity">
    <reaction evidence="2">
        <text>all-trans-4-hydroxyretinol + NAD(+) = all-trans-4-hydroxyretinal + NADH + H(+)</text>
        <dbReference type="Rhea" id="RHEA:55936"/>
        <dbReference type="ChEBI" id="CHEBI:15378"/>
        <dbReference type="ChEBI" id="CHEBI:57540"/>
        <dbReference type="ChEBI" id="CHEBI:57945"/>
        <dbReference type="ChEBI" id="CHEBI:132259"/>
        <dbReference type="ChEBI" id="CHEBI:139346"/>
    </reaction>
    <physiologicalReaction direction="left-to-right" evidence="7">
        <dbReference type="Rhea" id="RHEA:55937"/>
    </physiologicalReaction>
</comment>
<comment type="catalytic activity">
    <reaction evidence="2">
        <text>all-trans-4-oxoretinol + NAD(+) = all-trans-4-oxoretinal + NADH + H(+)</text>
        <dbReference type="Rhea" id="RHEA:60632"/>
        <dbReference type="ChEBI" id="CHEBI:15378"/>
        <dbReference type="ChEBI" id="CHEBI:44597"/>
        <dbReference type="ChEBI" id="CHEBI:57540"/>
        <dbReference type="ChEBI" id="CHEBI:57945"/>
        <dbReference type="ChEBI" id="CHEBI:139347"/>
    </reaction>
    <physiologicalReaction direction="right-to-left" evidence="7">
        <dbReference type="Rhea" id="RHEA:60634"/>
    </physiologicalReaction>
</comment>
<comment type="catalytic activity">
    <reaction evidence="4">
        <text>12-hydroxydodecanoate + NAD(+) = 12-oxododecanoate + NADH + H(+)</text>
        <dbReference type="Rhea" id="RHEA:60980"/>
        <dbReference type="ChEBI" id="CHEBI:15378"/>
        <dbReference type="ChEBI" id="CHEBI:36204"/>
        <dbReference type="ChEBI" id="CHEBI:57540"/>
        <dbReference type="ChEBI" id="CHEBI:57945"/>
        <dbReference type="ChEBI" id="CHEBI:144067"/>
    </reaction>
    <physiologicalReaction direction="left-to-right" evidence="9">
        <dbReference type="Rhea" id="RHEA:60981"/>
    </physiologicalReaction>
</comment>
<comment type="catalytic activity">
    <reaction evidence="4">
        <text>16-hydroxyhexadecanoate + NAD(+) = 16-oxohexadecanoate + NADH + H(+)</text>
        <dbReference type="Rhea" id="RHEA:60984"/>
        <dbReference type="ChEBI" id="CHEBI:15378"/>
        <dbReference type="ChEBI" id="CHEBI:55329"/>
        <dbReference type="ChEBI" id="CHEBI:57540"/>
        <dbReference type="ChEBI" id="CHEBI:57945"/>
        <dbReference type="ChEBI" id="CHEBI:144068"/>
    </reaction>
    <physiologicalReaction direction="left-to-right" evidence="9">
        <dbReference type="Rhea" id="RHEA:60985"/>
    </physiologicalReaction>
</comment>
<comment type="catalytic activity">
    <reaction evidence="4">
        <text>hexan-1-ol + NAD(+) = hexanal + NADH + H(+)</text>
        <dbReference type="Rhea" id="RHEA:60972"/>
        <dbReference type="ChEBI" id="CHEBI:15378"/>
        <dbReference type="ChEBI" id="CHEBI:57540"/>
        <dbReference type="ChEBI" id="CHEBI:57945"/>
        <dbReference type="ChEBI" id="CHEBI:87393"/>
        <dbReference type="ChEBI" id="CHEBI:88528"/>
    </reaction>
    <physiologicalReaction direction="left-to-right" evidence="9">
        <dbReference type="Rhea" id="RHEA:60973"/>
    </physiologicalReaction>
    <physiologicalReaction direction="right-to-left" evidence="9">
        <dbReference type="Rhea" id="RHEA:60974"/>
    </physiologicalReaction>
</comment>
<comment type="catalytic activity">
    <reaction evidence="4">
        <text>(E)-hex-2-en-1-ol + NAD(+) = (E)-hex-2-enal + NADH + H(+)</text>
        <dbReference type="Rhea" id="RHEA:60988"/>
        <dbReference type="ChEBI" id="CHEBI:15378"/>
        <dbReference type="ChEBI" id="CHEBI:28913"/>
        <dbReference type="ChEBI" id="CHEBI:57540"/>
        <dbReference type="ChEBI" id="CHEBI:57945"/>
        <dbReference type="ChEBI" id="CHEBI:141205"/>
    </reaction>
    <physiologicalReaction direction="left-to-right" evidence="9">
        <dbReference type="Rhea" id="RHEA:60989"/>
    </physiologicalReaction>
    <physiologicalReaction direction="right-to-left" evidence="9">
        <dbReference type="Rhea" id="RHEA:60990"/>
    </physiologicalReaction>
</comment>
<comment type="catalytic activity">
    <reaction evidence="4">
        <text>(E)-4-hydroxynon-2-en-1-ol + NAD(+) = (E)-4-hydroxynon-2-enal + NADH + H(+)</text>
        <dbReference type="Rhea" id="RHEA:60976"/>
        <dbReference type="ChEBI" id="CHEBI:15378"/>
        <dbReference type="ChEBI" id="CHEBI:57540"/>
        <dbReference type="ChEBI" id="CHEBI:57945"/>
        <dbReference type="ChEBI" id="CHEBI:58968"/>
        <dbReference type="ChEBI" id="CHEBI:142617"/>
    </reaction>
    <physiologicalReaction direction="right-to-left" evidence="9">
        <dbReference type="Rhea" id="RHEA:60978"/>
    </physiologicalReaction>
</comment>
<comment type="cofactor">
    <cofactor evidence="1">
        <name>Zn(2+)</name>
        <dbReference type="ChEBI" id="CHEBI:29105"/>
    </cofactor>
    <text evidence="1">Binds 2 Zn(2+) ions per subunit.</text>
</comment>
<comment type="activity regulation">
    <text evidence="2 4">Retinol oxidation is inhibited by the detergent Tween 80 (PubMed:15369820). Ethanol inhibits both all-trans-retinol and 9-cis-retinol oxidation (PubMed:9600267). 13-cis-retinol is an effective competitive inhibitor of the 9-cis-retinol oxidation (PubMed:9600267). All-trans-retinoic acid is a powerful inhibitor of all-trans-retinol oxidation (PubMed:9600267). 13-cis-retinoic acid is a powerful inhibitor of all-trans-retinol oxidation (PubMed:9600267). Cimetidine competitively inhibited ethanol oxidation (PubMed:9600267).</text>
</comment>
<comment type="biophysicochemical properties">
    <kinetics>
        <KM evidence="2">23 uM for all-trans-retinol</KM>
        <KM evidence="2">15 uM for all-trans-4-hydroxyretinol</KM>
        <KM evidence="2">28 uM for all-trans-3,4-didehydroretinol</KM>
        <KM evidence="2 4">34 uM for all-trans-retinal</KM>
        <KM evidence="2">17 uM for all-trans-4-oxoretinal</KM>
        <KM evidence="2">26 uM for all-trans-3,4-didehydroretinal</KM>
        <KM evidence="3">0.3 uM for all-trans-retinol</KM>
        <KM evidence="3">0.8 uM for all-trans-retinal</KM>
        <KM evidence="4">0.1 mM for 10-OH-decanoic acid (with 0.1 M sodium phosphate at pH 7.5)</KM>
        <KM evidence="4">0.17 mM for 12-OH-dodecanoic acid (with 0.1 M sodium phosphate at pH 7.5)</KM>
        <KM evidence="4">0.07 mM for 12-OH-dodecanoic acid (with 0.1 M glycine/NaOH at pH 10)</KM>
        <KM evidence="4">0.035 mM for 16-OH-hexadecanoic acid (with 0.1 M glycine/NaOH at pH 10)</KM>
        <KM evidence="4">0.14 mM for hexanol (with 0.1 M sodium phosphate at pH 7.5)</KM>
        <KM evidence="4">0.02 mM for hexanal (with 0.1 M sodium phosphate at pH 7.5)</KM>
        <KM evidence="4">0.017 mM for 2-hexenol (with 0.1 M sodium phosphate at pH 7.5)</KM>
        <KM evidence="4">0.025 mM for 2-hexenal (with 0.1 M sodium phosphate at pH 7.5)</KM>
        <KM evidence="4">0.038 mM for 4-hydroxynonenal (with 0.1 M sodium phosphate at pH 7.5)</KM>
        <KM evidence="4">15 uM for all-trans-retinol</KM>
        <KM evidence="4">36 uM for 9-cis-retinol</KM>
        <KM evidence="4">21 uM for 9-cis-retinal</KM>
    </kinetics>
</comment>
<comment type="subunit">
    <text evidence="1">Homodimer.</text>
</comment>
<comment type="subcellular location">
    <subcellularLocation>
        <location>Cytoplasm</location>
    </subcellularLocation>
</comment>
<comment type="alternative products">
    <event type="alternative splicing"/>
    <isoform>
        <id>P40394-1</id>
        <name>1</name>
        <sequence type="displayed"/>
    </isoform>
    <isoform>
        <id>P40394-2</id>
        <name>2</name>
        <sequence type="described" ref="VSP_043093"/>
    </isoform>
</comment>
<comment type="tissue specificity">
    <text>Preferentially expressed in stomach.</text>
</comment>
<comment type="miscellaneous">
    <text>There are 7 different ADH's isozymes in human: three belongs to class-I: alpha, beta, and gamma, one to class-II: pi, one to class-III: chi, one to class-IV: ADH7 and one to class-V: ADH6.</text>
</comment>
<comment type="similarity">
    <text evidence="6">Belongs to the zinc-containing alcohol dehydrogenase family. Class-IV subfamily.</text>
</comment>
<comment type="caution">
    <text evidence="6">It is uncertain whether Met-1 or Met-13 is the initiator.</text>
</comment>
<comment type="sequence caution" evidence="6">
    <conflict type="erroneous initiation">
        <sequence resource="EMBL-CDS" id="AAA19002"/>
    </conflict>
</comment>
<comment type="sequence caution" evidence="6">
    <conflict type="erroneous initiation">
        <sequence resource="EMBL-CDS" id="AAC51351"/>
    </conflict>
</comment>
<comment type="sequence caution" evidence="6">
    <conflict type="erroneous initiation">
        <sequence resource="EMBL-CDS" id="BAG35707"/>
    </conflict>
</comment>
<comment type="sequence caution" evidence="6">
    <conflict type="erroneous initiation">
        <sequence resource="EMBL-CDS" id="CAA53960"/>
    </conflict>
</comment>
<comment type="sequence caution" evidence="6">
    <conflict type="erroneous initiation">
        <sequence resource="EMBL-CDS" id="CAA53961"/>
    </conflict>
</comment>
<reference key="1">
    <citation type="journal article" date="1994" name="Eur. J. Biochem.">
        <title>Alcohol dehydrogenase of class IV (sigma sigma-ADH) from human stomach. cDNA sequence and structure/function relationships.</title>
        <authorList>
            <person name="Farres J."/>
            <person name="Moreno A."/>
            <person name="Crosas B."/>
            <person name="Peralba J.M."/>
            <person name="Allali-Hassani A."/>
            <person name="Hjelmqvist L."/>
            <person name="Joernvall H."/>
            <person name="Pares X."/>
        </authorList>
    </citation>
    <scope>NUCLEOTIDE SEQUENCE [MRNA] (ISOFORM 1)</scope>
    <source>
        <tissue>Stomach</tissue>
    </source>
</reference>
<reference key="2">
    <citation type="journal article" date="1994" name="J. Biol. Chem.">
        <title>The complete structure of human class IV alcohol dehydrogenase (retinol dehydrogenase) determined from the ADH7 gene.</title>
        <authorList>
            <person name="Satre M.A."/>
            <person name="Zgombic-Knight M."/>
            <person name="Duester G."/>
        </authorList>
    </citation>
    <scope>NUCLEOTIDE SEQUENCE [MRNA] (ISOFORM 1)</scope>
    <source>
        <tissue>Stomach</tissue>
    </source>
</reference>
<reference key="3">
    <citation type="journal article" date="1995" name="J. Biol. Chem.">
        <title>Genomic structure and expression of the ADH7 gene encoding human class IV alcohol dehydrogenase, the form most efficient for retinol metabolism in vitro.</title>
        <authorList>
            <person name="Zgombic-Knight M."/>
            <person name="Foglio M.H."/>
            <person name="Duester G."/>
        </authorList>
    </citation>
    <scope>NUCLEOTIDE SEQUENCE [GENOMIC DNA]</scope>
</reference>
<reference key="4">
    <citation type="journal article" date="2004" name="Nat. Genet.">
        <title>Complete sequencing and characterization of 21,243 full-length human cDNAs.</title>
        <authorList>
            <person name="Ota T."/>
            <person name="Suzuki Y."/>
            <person name="Nishikawa T."/>
            <person name="Otsuki T."/>
            <person name="Sugiyama T."/>
            <person name="Irie R."/>
            <person name="Wakamatsu A."/>
            <person name="Hayashi K."/>
            <person name="Sato H."/>
            <person name="Nagai K."/>
            <person name="Kimura K."/>
            <person name="Makita H."/>
            <person name="Sekine M."/>
            <person name="Obayashi M."/>
            <person name="Nishi T."/>
            <person name="Shibahara T."/>
            <person name="Tanaka T."/>
            <person name="Ishii S."/>
            <person name="Yamamoto J."/>
            <person name="Saito K."/>
            <person name="Kawai Y."/>
            <person name="Isono Y."/>
            <person name="Nakamura Y."/>
            <person name="Nagahari K."/>
            <person name="Murakami K."/>
            <person name="Yasuda T."/>
            <person name="Iwayanagi T."/>
            <person name="Wagatsuma M."/>
            <person name="Shiratori A."/>
            <person name="Sudo H."/>
            <person name="Hosoiri T."/>
            <person name="Kaku Y."/>
            <person name="Kodaira H."/>
            <person name="Kondo H."/>
            <person name="Sugawara M."/>
            <person name="Takahashi M."/>
            <person name="Kanda K."/>
            <person name="Yokoi T."/>
            <person name="Furuya T."/>
            <person name="Kikkawa E."/>
            <person name="Omura Y."/>
            <person name="Abe K."/>
            <person name="Kamihara K."/>
            <person name="Katsuta N."/>
            <person name="Sato K."/>
            <person name="Tanikawa M."/>
            <person name="Yamazaki M."/>
            <person name="Ninomiya K."/>
            <person name="Ishibashi T."/>
            <person name="Yamashita H."/>
            <person name="Murakawa K."/>
            <person name="Fujimori K."/>
            <person name="Tanai H."/>
            <person name="Kimata M."/>
            <person name="Watanabe M."/>
            <person name="Hiraoka S."/>
            <person name="Chiba Y."/>
            <person name="Ishida S."/>
            <person name="Ono Y."/>
            <person name="Takiguchi S."/>
            <person name="Watanabe S."/>
            <person name="Yosida M."/>
            <person name="Hotuta T."/>
            <person name="Kusano J."/>
            <person name="Kanehori K."/>
            <person name="Takahashi-Fujii A."/>
            <person name="Hara H."/>
            <person name="Tanase T.-O."/>
            <person name="Nomura Y."/>
            <person name="Togiya S."/>
            <person name="Komai F."/>
            <person name="Hara R."/>
            <person name="Takeuchi K."/>
            <person name="Arita M."/>
            <person name="Imose N."/>
            <person name="Musashino K."/>
            <person name="Yuuki H."/>
            <person name="Oshima A."/>
            <person name="Sasaki N."/>
            <person name="Aotsuka S."/>
            <person name="Yoshikawa Y."/>
            <person name="Matsunawa H."/>
            <person name="Ichihara T."/>
            <person name="Shiohata N."/>
            <person name="Sano S."/>
            <person name="Moriya S."/>
            <person name="Momiyama H."/>
            <person name="Satoh N."/>
            <person name="Takami S."/>
            <person name="Terashima Y."/>
            <person name="Suzuki O."/>
            <person name="Nakagawa S."/>
            <person name="Senoh A."/>
            <person name="Mizoguchi H."/>
            <person name="Goto Y."/>
            <person name="Shimizu F."/>
            <person name="Wakebe H."/>
            <person name="Hishigaki H."/>
            <person name="Watanabe T."/>
            <person name="Sugiyama A."/>
            <person name="Takemoto M."/>
            <person name="Kawakami B."/>
            <person name="Yamazaki M."/>
            <person name="Watanabe K."/>
            <person name="Kumagai A."/>
            <person name="Itakura S."/>
            <person name="Fukuzumi Y."/>
            <person name="Fujimori Y."/>
            <person name="Komiyama M."/>
            <person name="Tashiro H."/>
            <person name="Tanigami A."/>
            <person name="Fujiwara T."/>
            <person name="Ono T."/>
            <person name="Yamada K."/>
            <person name="Fujii Y."/>
            <person name="Ozaki K."/>
            <person name="Hirao M."/>
            <person name="Ohmori Y."/>
            <person name="Kawabata A."/>
            <person name="Hikiji T."/>
            <person name="Kobatake N."/>
            <person name="Inagaki H."/>
            <person name="Ikema Y."/>
            <person name="Okamoto S."/>
            <person name="Okitani R."/>
            <person name="Kawakami T."/>
            <person name="Noguchi S."/>
            <person name="Itoh T."/>
            <person name="Shigeta K."/>
            <person name="Senba T."/>
            <person name="Matsumura K."/>
            <person name="Nakajima Y."/>
            <person name="Mizuno T."/>
            <person name="Morinaga M."/>
            <person name="Sasaki M."/>
            <person name="Togashi T."/>
            <person name="Oyama M."/>
            <person name="Hata H."/>
            <person name="Watanabe M."/>
            <person name="Komatsu T."/>
            <person name="Mizushima-Sugano J."/>
            <person name="Satoh T."/>
            <person name="Shirai Y."/>
            <person name="Takahashi Y."/>
            <person name="Nakagawa K."/>
            <person name="Okumura K."/>
            <person name="Nagase T."/>
            <person name="Nomura N."/>
            <person name="Kikuchi H."/>
            <person name="Masuho Y."/>
            <person name="Yamashita R."/>
            <person name="Nakai K."/>
            <person name="Yada T."/>
            <person name="Nakamura Y."/>
            <person name="Ohara O."/>
            <person name="Isogai T."/>
            <person name="Sugano S."/>
        </authorList>
    </citation>
    <scope>NUCLEOTIDE SEQUENCE [LARGE SCALE MRNA] (ISOFORMS 1 AND 2)</scope>
    <source>
        <tissue>Esophagus</tissue>
        <tissue>Trachea</tissue>
    </source>
</reference>
<reference key="5">
    <citation type="journal article" date="2005" name="Nature">
        <title>Generation and annotation of the DNA sequences of human chromosomes 2 and 4.</title>
        <authorList>
            <person name="Hillier L.W."/>
            <person name="Graves T.A."/>
            <person name="Fulton R.S."/>
            <person name="Fulton L.A."/>
            <person name="Pepin K.H."/>
            <person name="Minx P."/>
            <person name="Wagner-McPherson C."/>
            <person name="Layman D."/>
            <person name="Wylie K."/>
            <person name="Sekhon M."/>
            <person name="Becker M.C."/>
            <person name="Fewell G.A."/>
            <person name="Delehaunty K.D."/>
            <person name="Miner T.L."/>
            <person name="Nash W.E."/>
            <person name="Kremitzki C."/>
            <person name="Oddy L."/>
            <person name="Du H."/>
            <person name="Sun H."/>
            <person name="Bradshaw-Cordum H."/>
            <person name="Ali J."/>
            <person name="Carter J."/>
            <person name="Cordes M."/>
            <person name="Harris A."/>
            <person name="Isak A."/>
            <person name="van Brunt A."/>
            <person name="Nguyen C."/>
            <person name="Du F."/>
            <person name="Courtney L."/>
            <person name="Kalicki J."/>
            <person name="Ozersky P."/>
            <person name="Abbott S."/>
            <person name="Armstrong J."/>
            <person name="Belter E.A."/>
            <person name="Caruso L."/>
            <person name="Cedroni M."/>
            <person name="Cotton M."/>
            <person name="Davidson T."/>
            <person name="Desai A."/>
            <person name="Elliott G."/>
            <person name="Erb T."/>
            <person name="Fronick C."/>
            <person name="Gaige T."/>
            <person name="Haakenson W."/>
            <person name="Haglund K."/>
            <person name="Holmes A."/>
            <person name="Harkins R."/>
            <person name="Kim K."/>
            <person name="Kruchowski S.S."/>
            <person name="Strong C.M."/>
            <person name="Grewal N."/>
            <person name="Goyea E."/>
            <person name="Hou S."/>
            <person name="Levy A."/>
            <person name="Martinka S."/>
            <person name="Mead K."/>
            <person name="McLellan M.D."/>
            <person name="Meyer R."/>
            <person name="Randall-Maher J."/>
            <person name="Tomlinson C."/>
            <person name="Dauphin-Kohlberg S."/>
            <person name="Kozlowicz-Reilly A."/>
            <person name="Shah N."/>
            <person name="Swearengen-Shahid S."/>
            <person name="Snider J."/>
            <person name="Strong J.T."/>
            <person name="Thompson J."/>
            <person name="Yoakum M."/>
            <person name="Leonard S."/>
            <person name="Pearman C."/>
            <person name="Trani L."/>
            <person name="Radionenko M."/>
            <person name="Waligorski J.E."/>
            <person name="Wang C."/>
            <person name="Rock S.M."/>
            <person name="Tin-Wollam A.-M."/>
            <person name="Maupin R."/>
            <person name="Latreille P."/>
            <person name="Wendl M.C."/>
            <person name="Yang S.-P."/>
            <person name="Pohl C."/>
            <person name="Wallis J.W."/>
            <person name="Spieth J."/>
            <person name="Bieri T.A."/>
            <person name="Berkowicz N."/>
            <person name="Nelson J.O."/>
            <person name="Osborne J."/>
            <person name="Ding L."/>
            <person name="Meyer R."/>
            <person name="Sabo A."/>
            <person name="Shotland Y."/>
            <person name="Sinha P."/>
            <person name="Wohldmann P.E."/>
            <person name="Cook L.L."/>
            <person name="Hickenbotham M.T."/>
            <person name="Eldred J."/>
            <person name="Williams D."/>
            <person name="Jones T.A."/>
            <person name="She X."/>
            <person name="Ciccarelli F.D."/>
            <person name="Izaurralde E."/>
            <person name="Taylor J."/>
            <person name="Schmutz J."/>
            <person name="Myers R.M."/>
            <person name="Cox D.R."/>
            <person name="Huang X."/>
            <person name="McPherson J.D."/>
            <person name="Mardis E.R."/>
            <person name="Clifton S.W."/>
            <person name="Warren W.C."/>
            <person name="Chinwalla A.T."/>
            <person name="Eddy S.R."/>
            <person name="Marra M.A."/>
            <person name="Ovcharenko I."/>
            <person name="Furey T.S."/>
            <person name="Miller W."/>
            <person name="Eichler E.E."/>
            <person name="Bork P."/>
            <person name="Suyama M."/>
            <person name="Torrents D."/>
            <person name="Waterston R.H."/>
            <person name="Wilson R.K."/>
        </authorList>
    </citation>
    <scope>NUCLEOTIDE SEQUENCE [LARGE SCALE GENOMIC DNA]</scope>
</reference>
<reference key="6">
    <citation type="submission" date="2005-07" db="EMBL/GenBank/DDBJ databases">
        <authorList>
            <person name="Mural R.J."/>
            <person name="Istrail S."/>
            <person name="Sutton G.G."/>
            <person name="Florea L."/>
            <person name="Halpern A.L."/>
            <person name="Mobarry C.M."/>
            <person name="Lippert R."/>
            <person name="Walenz B."/>
            <person name="Shatkay H."/>
            <person name="Dew I."/>
            <person name="Miller J.R."/>
            <person name="Flanigan M.J."/>
            <person name="Edwards N.J."/>
            <person name="Bolanos R."/>
            <person name="Fasulo D."/>
            <person name="Halldorsson B.V."/>
            <person name="Hannenhalli S."/>
            <person name="Turner R."/>
            <person name="Yooseph S."/>
            <person name="Lu F."/>
            <person name="Nusskern D.R."/>
            <person name="Shue B.C."/>
            <person name="Zheng X.H."/>
            <person name="Zhong F."/>
            <person name="Delcher A.L."/>
            <person name="Huson D.H."/>
            <person name="Kravitz S.A."/>
            <person name="Mouchard L."/>
            <person name="Reinert K."/>
            <person name="Remington K.A."/>
            <person name="Clark A.G."/>
            <person name="Waterman M.S."/>
            <person name="Eichler E.E."/>
            <person name="Adams M.D."/>
            <person name="Hunkapiller M.W."/>
            <person name="Myers E.W."/>
            <person name="Venter J.C."/>
        </authorList>
    </citation>
    <scope>NUCLEOTIDE SEQUENCE [LARGE SCALE GENOMIC DNA]</scope>
</reference>
<reference key="7">
    <citation type="journal article" date="2004" name="Genome Res.">
        <title>The status, quality, and expansion of the NIH full-length cDNA project: the Mammalian Gene Collection (MGC).</title>
        <authorList>
            <consortium name="The MGC Project Team"/>
        </authorList>
    </citation>
    <scope>NUCLEOTIDE SEQUENCE [LARGE SCALE MRNA] (ISOFORM 1)</scope>
</reference>
<reference key="8">
    <citation type="journal article" date="1994" name="FEBS Lett.">
        <title>Molecular characterization of a class IV human alcohol dehydrogenase gene (ADH7).</title>
        <authorList>
            <person name="Yokoyama S."/>
            <person name="Matsuo Y."/>
            <person name="Ramsbotham R."/>
            <person name="Yokoyama R."/>
        </authorList>
    </citation>
    <scope>NUCLEOTIDE SEQUENCE [MRNA] OF 13-386 (ISOFORM 1)</scope>
    <scope>ZINC-BINDING SITES</scope>
    <source>
        <tissue>Stomach</tissue>
    </source>
</reference>
<reference key="9">
    <citation type="journal article" date="1995" name="J. Biol. Chem.">
        <title>Expression and kinetic characterization of recombinant human stomach alcohol dehydrogenase. Active-site amino acid sequence explains substrate specificity compared with liver isozymes.</title>
        <authorList>
            <person name="Kedishvili N.Y."/>
            <person name="Bosron W.F."/>
            <person name="Stone C.L."/>
            <person name="Hurley T.D."/>
            <person name="Peggs C.F."/>
            <person name="Thomasson H.R."/>
            <person name="Popov K.M."/>
            <person name="Carr L.G."/>
            <person name="Edenberg H.J."/>
            <person name="Li T.K."/>
        </authorList>
    </citation>
    <scope>NUCLEOTIDE SEQUENCE [MRNA] OF 13-386 (ISOFORM 1)</scope>
    <source>
        <tissue>Stomach</tissue>
    </source>
</reference>
<reference key="10">
    <citation type="journal article" date="1996" name="Genomics">
        <title>Molecular cloning and chromosomal localization of the ADH7 gene encoding human class IV (sigma) ADH.</title>
        <authorList>
            <person name="Yokoyama H."/>
            <person name="Baraona E."/>
            <person name="Lieber C.S."/>
        </authorList>
    </citation>
    <scope>NUCLEOTIDE SEQUENCE [GENOMIC DNA] OF 13-386</scope>
    <source>
        <tissue>Foreskin</tissue>
    </source>
</reference>
<reference key="11">
    <citation type="journal article" date="1992" name="FEBS Lett.">
        <title>Class IV alcohol dehydrogenase (the gastric enzyme). Structural analysis of human sigma sigma-ADH reveals class IV to be variable and confirms the presence of a fifth mammalian alcohol dehydrogenase class.</title>
        <authorList>
            <person name="Pares X."/>
            <person name="Cederlund E."/>
            <person name="Moreno A."/>
            <person name="Saubi N."/>
            <person name="Hoeoeg J.-O."/>
            <person name="Joernvall H."/>
        </authorList>
    </citation>
    <scope>PROTEIN SEQUENCE OF 24-33; 53-58; 74-92; 97-123; 147-154 AND 181-186</scope>
</reference>
<reference key="12">
    <citation type="journal article" date="1995" name="Alcohol. Clin. Exp. Res.">
        <title>Human stomach class IV alcohol dehydrogenase: molecular genetic analysis.</title>
        <authorList>
            <person name="Cheung B."/>
            <person name="Anderson J.K."/>
            <person name="Holmes R.S."/>
            <person name="Beacham I.R."/>
        </authorList>
    </citation>
    <scope>NUCLEOTIDE SEQUENCE [MRNA] OF 239-311 (ISOFORM 1)</scope>
    <source>
        <tissue>Stomach</tissue>
    </source>
</reference>
<reference key="13">
    <citation type="journal article" date="1998" name="FEBS Lett.">
        <title>Retinoids, omega-hydroxyfatty acids and cytotoxic aldehydes as physiological substrates, and H2-receptor antagonists as pharmacological inhibitors, of human class IV alcohol dehydrogenase.</title>
        <authorList>
            <person name="Allali-Hassani A."/>
            <person name="Peralba J.M."/>
            <person name="Martras S."/>
            <person name="Farres J."/>
            <person name="Pares X."/>
        </authorList>
    </citation>
    <scope>CATALYTIC ACTIVITY</scope>
    <scope>FUNCTION</scope>
    <scope>BIOPHYSICOCHEMICAL PROPERTIES</scope>
    <scope>ACTIVITY REGULATION</scope>
</reference>
<reference key="14">
    <citation type="journal article" date="2004" name="Arch. Biochem. Biophys.">
        <title>Kinetics of human alcohol dehydrogenase with ring-oxidized retinoids: effect of Tween 80.</title>
        <authorList>
            <person name="Martras S."/>
            <person name="Alvarez R."/>
            <person name="Gallego O."/>
            <person name="Dominguez M."/>
            <person name="de Lera A.R."/>
            <person name="Farres J."/>
            <person name="Pares X."/>
        </authorList>
    </citation>
    <scope>CATALYTIC ACTIVITY</scope>
    <scope>FUNCTION</scope>
    <scope>ACTIVITY REGULATION</scope>
    <scope>BIOPHYSICOCHEMICAL PROPERTIES</scope>
</reference>
<reference key="15">
    <citation type="journal article" date="2006" name="Biochem. J.">
        <title>Comparative functional analysis of human medium-chain dehydrogenases, short-chain dehydrogenases/reductases and aldo-keto reductases with retinoids.</title>
        <authorList>
            <person name="Gallego O."/>
            <person name="Belyaeva O.V."/>
            <person name="Porte S."/>
            <person name="Ruiz F.X."/>
            <person name="Stetsenko A.V."/>
            <person name="Shabrova E.V."/>
            <person name="Kostereva N.V."/>
            <person name="Farres J."/>
            <person name="Pares X."/>
            <person name="Kedishvili N.Y."/>
        </authorList>
    </citation>
    <scope>CATALYTIC ACTIVITY</scope>
    <scope>FUNCTION</scope>
    <scope>BIOPHYSICOCHEMICAL PROPERTIES</scope>
</reference>
<reference key="16">
    <citation type="journal article" date="1997" name="J. Biol. Chem.">
        <title>X-ray structure of human class IV sigmasigma alcohol dehydrogenase. Structural basis for substrate specificity.</title>
        <authorList>
            <person name="Xie P."/>
            <person name="Parsons S.H."/>
            <person name="Speckhard D.C."/>
            <person name="Bosron W.F."/>
            <person name="Hurley T.D."/>
        </authorList>
    </citation>
    <scope>X-RAY CRYSTALLOGRAPHY (3.0 ANGSTROMS) OF 14-386</scope>
</reference>
<reference key="17">
    <citation type="journal article" date="1999" name="Protein Sci.">
        <title>Methionine-141 directly influences the binding of 4-methylpyrazole in human sigma sigma alcohol dehydrogenase.</title>
        <authorList>
            <person name="Xie P.T."/>
            <person name="Hurley T.D."/>
        </authorList>
    </citation>
    <scope>X-RAY CRYSTALLOGRAPHY (2.4 ANGSTROMS) OF 14-386 IN COMPLEX WITH NAD AND ZINC IONS</scope>
</reference>
<protein>
    <recommendedName>
        <fullName evidence="6">All-trans-retinol dehydrogenase [NAD(+)] ADH7</fullName>
        <ecNumber evidence="2 3">1.1.1.105</ecNumber>
    </recommendedName>
    <alternativeName>
        <fullName>Alcohol dehydrogenase class 4 mu/sigma chain</fullName>
        <ecNumber evidence="4">1.1.1.1</ecNumber>
    </alternativeName>
    <alternativeName>
        <fullName>Alcohol dehydrogenase class IV mu/sigma chain</fullName>
    </alternativeName>
    <alternativeName>
        <fullName>Gastric alcohol dehydrogenase</fullName>
    </alternativeName>
    <alternativeName>
        <fullName evidence="6">Omega-hydroxydecanoate dehydrogenase ADH7</fullName>
        <ecNumber evidence="4">1.1.1.66</ecNumber>
    </alternativeName>
    <alternativeName>
        <fullName>Retinol dehydrogenase</fullName>
    </alternativeName>
</protein>
<name>ADH7_HUMAN</name>
<keyword id="KW-0002">3D-structure</keyword>
<keyword id="KW-0025">Alternative splicing</keyword>
<keyword id="KW-0963">Cytoplasm</keyword>
<keyword id="KW-0903">Direct protein sequencing</keyword>
<keyword id="KW-0443">Lipid metabolism</keyword>
<keyword id="KW-0479">Metal-binding</keyword>
<keyword id="KW-0520">NAD</keyword>
<keyword id="KW-0560">Oxidoreductase</keyword>
<keyword id="KW-1267">Proteomics identification</keyword>
<keyword id="KW-1185">Reference proteome</keyword>
<keyword id="KW-0862">Zinc</keyword>
<feature type="chain" id="PRO_0000160691" description="All-trans-retinol dehydrogenase [NAD(+)] ADH7">
    <location>
        <begin position="1"/>
        <end position="386"/>
    </location>
</feature>
<feature type="binding site" evidence="1 11 12 13">
    <location>
        <position position="59"/>
    </location>
    <ligand>
        <name>Zn(2+)</name>
        <dbReference type="ChEBI" id="CHEBI:29105"/>
        <label>1</label>
        <note>catalytic</note>
    </ligand>
</feature>
<feature type="binding site" evidence="1 11 12 13">
    <location>
        <begin position="60"/>
        <end position="64"/>
    </location>
    <ligand>
        <name>NAD(+)</name>
        <dbReference type="ChEBI" id="CHEBI:57540"/>
    </ligand>
</feature>
<feature type="binding site" evidence="1 11 12 13">
    <location>
        <position position="80"/>
    </location>
    <ligand>
        <name>Zn(2+)</name>
        <dbReference type="ChEBI" id="CHEBI:29105"/>
        <label>1</label>
        <note>catalytic</note>
    </ligand>
</feature>
<feature type="binding site" evidence="1 11 12 13">
    <location>
        <position position="110"/>
    </location>
    <ligand>
        <name>Zn(2+)</name>
        <dbReference type="ChEBI" id="CHEBI:29105"/>
        <label>2</label>
    </ligand>
</feature>
<feature type="binding site" evidence="1 11 12 13">
    <location>
        <position position="113"/>
    </location>
    <ligand>
        <name>Zn(2+)</name>
        <dbReference type="ChEBI" id="CHEBI:29105"/>
        <label>2</label>
    </ligand>
</feature>
<feature type="binding site" evidence="1 11 12 13">
    <location>
        <position position="116"/>
    </location>
    <ligand>
        <name>Zn(2+)</name>
        <dbReference type="ChEBI" id="CHEBI:29105"/>
        <label>2</label>
    </ligand>
</feature>
<feature type="binding site" evidence="1 11 12 13">
    <location>
        <position position="124"/>
    </location>
    <ligand>
        <name>Zn(2+)</name>
        <dbReference type="ChEBI" id="CHEBI:29105"/>
        <label>2</label>
    </ligand>
</feature>
<feature type="binding site" evidence="1 11 12 13">
    <location>
        <position position="186"/>
    </location>
    <ligand>
        <name>Zn(2+)</name>
        <dbReference type="ChEBI" id="CHEBI:29105"/>
        <label>1</label>
        <note>catalytic</note>
    </ligand>
</feature>
<feature type="binding site" evidence="1 11 12 13">
    <location>
        <begin position="211"/>
        <end position="216"/>
    </location>
    <ligand>
        <name>NAD(+)</name>
        <dbReference type="ChEBI" id="CHEBI:57540"/>
    </ligand>
</feature>
<feature type="binding site" evidence="1 11 12 13">
    <location>
        <position position="235"/>
    </location>
    <ligand>
        <name>NAD(+)</name>
        <dbReference type="ChEBI" id="CHEBI:57540"/>
    </ligand>
</feature>
<feature type="binding site" evidence="1 11 12 13">
    <location>
        <position position="240"/>
    </location>
    <ligand>
        <name>NAD(+)</name>
        <dbReference type="ChEBI" id="CHEBI:57540"/>
    </ligand>
</feature>
<feature type="binding site" evidence="1 11 12 13">
    <location>
        <begin position="281"/>
        <end position="283"/>
    </location>
    <ligand>
        <name>NAD(+)</name>
        <dbReference type="ChEBI" id="CHEBI:57540"/>
    </ligand>
</feature>
<feature type="binding site" evidence="1 11 12 13">
    <location>
        <begin position="304"/>
        <end position="306"/>
    </location>
    <ligand>
        <name>NAD(+)</name>
        <dbReference type="ChEBI" id="CHEBI:57540"/>
    </ligand>
</feature>
<feature type="binding site" evidence="1 11 12 13">
    <location>
        <begin position="329"/>
        <end position="331"/>
    </location>
    <ligand>
        <name>NAD(+)</name>
        <dbReference type="ChEBI" id="CHEBI:57540"/>
    </ligand>
</feature>
<feature type="binding site" evidence="1 11 12 13">
    <location>
        <position position="381"/>
    </location>
    <ligand>
        <name>NAD(+)</name>
        <dbReference type="ChEBI" id="CHEBI:57540"/>
    </ligand>
</feature>
<feature type="splice variant" id="VSP_043093" description="In isoform 2." evidence="5">
    <original>MFAEIQIQDKDRMGTAGK</original>
    <variation>MKCLVSRHTVRETLDMVFQRMSVEAG</variation>
    <location>
        <begin position="1"/>
        <end position="18"/>
    </location>
</feature>
<feature type="sequence variant" id="VAR_024364" description="In dbSNP:rs1573496.">
    <original>G</original>
    <variation>A</variation>
    <location>
        <position position="92"/>
    </location>
</feature>
<feature type="sequence conflict" description="In Ref. 2; AAA19002." evidence="6" ref="2">
    <original>D</original>
    <variation>E</variation>
    <location>
        <position position="9"/>
    </location>
</feature>
<feature type="sequence conflict" description="In Ref. 11; AA sequence." evidence="6" ref="11">
    <original>Q</original>
    <variation>R</variation>
    <location>
        <position position="32"/>
    </location>
</feature>
<feature type="sequence conflict" description="In Ref. 11; AA sequence." evidence="6" ref="11">
    <original>T</original>
    <variation>R</variation>
    <location>
        <position position="83"/>
    </location>
</feature>
<feature type="sequence conflict" description="In Ref. 10; AAB38424." evidence="6" ref="10">
    <original>C</original>
    <variation>V</variation>
    <location>
        <position position="110"/>
    </location>
</feature>
<feature type="sequence conflict" description="In Ref. 11; AA sequence." evidence="6" ref="11">
    <original>HH</original>
    <variation>GR</variation>
    <location>
        <begin position="150"/>
        <end position="151"/>
    </location>
</feature>
<feature type="sequence conflict" description="In Ref. 10; AAB38424." evidence="6" ref="10">
    <original>EY</original>
    <variation>VI</variation>
    <location>
        <begin position="160"/>
        <end position="161"/>
    </location>
</feature>
<feature type="sequence conflict" description="In Ref. 10; AAB38424." evidence="6" ref="10">
    <original>V</original>
    <variation>E</variation>
    <location>
        <position position="169"/>
    </location>
</feature>
<feature type="sequence conflict" description="In Ref. 4; BAG35707." evidence="6" ref="4">
    <original>A</original>
    <variation>T</variation>
    <location>
        <position position="175"/>
    </location>
</feature>
<feature type="sequence conflict" description="In Ref. 10; AAB38424." evidence="6" ref="10">
    <original>L</original>
    <variation>V</variation>
    <location>
        <position position="217"/>
    </location>
</feature>
<feature type="strand" evidence="15">
    <location>
        <begin position="20"/>
        <end position="29"/>
    </location>
</feature>
<feature type="strand" evidence="15">
    <location>
        <begin position="35"/>
        <end position="41"/>
    </location>
</feature>
<feature type="strand" evidence="15">
    <location>
        <begin position="48"/>
        <end position="57"/>
    </location>
</feature>
<feature type="helix" evidence="15">
    <location>
        <begin position="60"/>
        <end position="67"/>
    </location>
</feature>
<feature type="strand" evidence="14">
    <location>
        <begin position="68"/>
        <end position="70"/>
    </location>
</feature>
<feature type="strand" evidence="15">
    <location>
        <begin position="74"/>
        <end position="76"/>
    </location>
</feature>
<feature type="strand" evidence="15">
    <location>
        <begin position="81"/>
        <end position="89"/>
    </location>
</feature>
<feature type="strand" evidence="15">
    <location>
        <begin position="101"/>
        <end position="104"/>
    </location>
</feature>
<feature type="strand" evidence="15">
    <location>
        <begin position="111"/>
        <end position="113"/>
    </location>
</feature>
<feature type="helix" evidence="15">
    <location>
        <begin position="114"/>
        <end position="117"/>
    </location>
</feature>
<feature type="strand" evidence="15">
    <location>
        <begin position="142"/>
        <end position="150"/>
    </location>
</feature>
<feature type="turn" evidence="15">
    <location>
        <begin position="153"/>
        <end position="155"/>
    </location>
</feature>
<feature type="strand" evidence="15">
    <location>
        <begin position="158"/>
        <end position="165"/>
    </location>
</feature>
<feature type="helix" evidence="15">
    <location>
        <begin position="166"/>
        <end position="168"/>
    </location>
</feature>
<feature type="strand" evidence="15">
    <location>
        <begin position="169"/>
        <end position="171"/>
    </location>
</feature>
<feature type="helix" evidence="15">
    <location>
        <begin position="178"/>
        <end position="181"/>
    </location>
</feature>
<feature type="helix" evidence="15">
    <location>
        <begin position="182"/>
        <end position="185"/>
    </location>
</feature>
<feature type="helix" evidence="15">
    <location>
        <begin position="187"/>
        <end position="196"/>
    </location>
</feature>
<feature type="strand" evidence="15">
    <location>
        <begin position="206"/>
        <end position="210"/>
    </location>
</feature>
<feature type="helix" evidence="15">
    <location>
        <begin position="214"/>
        <end position="225"/>
    </location>
</feature>
<feature type="strand" evidence="15">
    <location>
        <begin position="229"/>
        <end position="234"/>
    </location>
</feature>
<feature type="helix" evidence="15">
    <location>
        <begin position="238"/>
        <end position="240"/>
    </location>
</feature>
<feature type="helix" evidence="15">
    <location>
        <begin position="241"/>
        <end position="247"/>
    </location>
</feature>
<feature type="strand" evidence="15">
    <location>
        <begin position="250"/>
        <end position="253"/>
    </location>
</feature>
<feature type="helix" evidence="15">
    <location>
        <begin position="255"/>
        <end position="257"/>
    </location>
</feature>
<feature type="helix" evidence="15">
    <location>
        <begin position="262"/>
        <end position="270"/>
    </location>
</feature>
<feature type="strand" evidence="15">
    <location>
        <begin position="276"/>
        <end position="279"/>
    </location>
</feature>
<feature type="helix" evidence="15">
    <location>
        <begin position="284"/>
        <end position="291"/>
    </location>
</feature>
<feature type="turn" evidence="15">
    <location>
        <begin position="296"/>
        <end position="298"/>
    </location>
</feature>
<feature type="strand" evidence="15">
    <location>
        <begin position="300"/>
        <end position="303"/>
    </location>
</feature>
<feature type="strand" evidence="15">
    <location>
        <begin position="313"/>
        <end position="315"/>
    </location>
</feature>
<feature type="helix" evidence="15">
    <location>
        <begin position="318"/>
        <end position="321"/>
    </location>
</feature>
<feature type="strand" evidence="15">
    <location>
        <begin position="325"/>
        <end position="328"/>
    </location>
</feature>
<feature type="helix" evidence="15">
    <location>
        <begin position="331"/>
        <end position="333"/>
    </location>
</feature>
<feature type="helix" evidence="15">
    <location>
        <begin position="336"/>
        <end position="347"/>
    </location>
</feature>
<feature type="turn" evidence="15">
    <location>
        <begin position="348"/>
        <end position="350"/>
    </location>
</feature>
<feature type="helix" evidence="15">
    <location>
        <begin position="355"/>
        <end position="357"/>
    </location>
</feature>
<feature type="strand" evidence="15">
    <location>
        <begin position="358"/>
        <end position="363"/>
    </location>
</feature>
<feature type="helix" evidence="15">
    <location>
        <begin position="364"/>
        <end position="366"/>
    </location>
</feature>
<feature type="helix" evidence="15">
    <location>
        <begin position="367"/>
        <end position="375"/>
    </location>
</feature>
<feature type="strand" evidence="15">
    <location>
        <begin position="380"/>
        <end position="385"/>
    </location>
</feature>
<accession>P40394</accession>
<accession>A2RRB6</accession>
<accession>A8MVN9</accession>
<accession>B2R760</accession>
<accession>B4DWV6</accession>
<accession>Q13713</accession>
<gene>
    <name evidence="10" type="primary">ADH7</name>
</gene>
<organism>
    <name type="scientific">Homo sapiens</name>
    <name type="common">Human</name>
    <dbReference type="NCBI Taxonomy" id="9606"/>
    <lineage>
        <taxon>Eukaryota</taxon>
        <taxon>Metazoa</taxon>
        <taxon>Chordata</taxon>
        <taxon>Craniata</taxon>
        <taxon>Vertebrata</taxon>
        <taxon>Euteleostomi</taxon>
        <taxon>Mammalia</taxon>
        <taxon>Eutheria</taxon>
        <taxon>Euarchontoglires</taxon>
        <taxon>Primates</taxon>
        <taxon>Haplorrhini</taxon>
        <taxon>Catarrhini</taxon>
        <taxon>Hominidae</taxon>
        <taxon>Homo</taxon>
    </lineage>
</organism>
<evidence type="ECO:0000269" key="1">
    <source>
    </source>
</evidence>
<evidence type="ECO:0000269" key="2">
    <source>
    </source>
</evidence>
<evidence type="ECO:0000269" key="3">
    <source>
    </source>
</evidence>
<evidence type="ECO:0000269" key="4">
    <source>
    </source>
</evidence>
<evidence type="ECO:0000303" key="5">
    <source>
    </source>
</evidence>
<evidence type="ECO:0000305" key="6"/>
<evidence type="ECO:0000305" key="7">
    <source>
    </source>
</evidence>
<evidence type="ECO:0000305" key="8">
    <source>
    </source>
</evidence>
<evidence type="ECO:0000305" key="9">
    <source>
    </source>
</evidence>
<evidence type="ECO:0000312" key="10">
    <source>
        <dbReference type="HGNC" id="HGNC:256"/>
    </source>
</evidence>
<evidence type="ECO:0007744" key="11">
    <source>
        <dbReference type="PDB" id="1AGN"/>
    </source>
</evidence>
<evidence type="ECO:0007744" key="12">
    <source>
        <dbReference type="PDB" id="1D1S"/>
    </source>
</evidence>
<evidence type="ECO:0007744" key="13">
    <source>
        <dbReference type="PDB" id="1D1T"/>
    </source>
</evidence>
<evidence type="ECO:0007829" key="14">
    <source>
        <dbReference type="PDB" id="1AGN"/>
    </source>
</evidence>
<evidence type="ECO:0007829" key="15">
    <source>
        <dbReference type="PDB" id="1D1T"/>
    </source>
</evidence>
<proteinExistence type="evidence at protein level"/>
<dbReference type="EC" id="1.1.1.105" evidence="2 3"/>
<dbReference type="EC" id="1.1.1.1" evidence="4"/>
<dbReference type="EC" id="1.1.1.66" evidence="4"/>
<dbReference type="EMBL" id="X76342">
    <property type="protein sequence ID" value="CAA53961.1"/>
    <property type="status" value="ALT_INIT"/>
    <property type="molecule type" value="mRNA"/>
</dbReference>
<dbReference type="EMBL" id="X76342">
    <property type="protein sequence ID" value="CAA53960.1"/>
    <property type="status" value="ALT_INIT"/>
    <property type="molecule type" value="mRNA"/>
</dbReference>
<dbReference type="EMBL" id="U07821">
    <property type="protein sequence ID" value="AAA19002.1"/>
    <property type="status" value="ALT_INIT"/>
    <property type="molecule type" value="mRNA"/>
</dbReference>
<dbReference type="EMBL" id="U16293">
    <property type="protein sequence ID" value="AAC51351.1"/>
    <property type="status" value="ALT_INIT"/>
    <property type="molecule type" value="Genomic_DNA"/>
</dbReference>
<dbReference type="EMBL" id="U16286">
    <property type="protein sequence ID" value="AAC51351.1"/>
    <property type="status" value="JOINED"/>
    <property type="molecule type" value="Genomic_DNA"/>
</dbReference>
<dbReference type="EMBL" id="U16287">
    <property type="protein sequence ID" value="AAC51351.1"/>
    <property type="status" value="JOINED"/>
    <property type="molecule type" value="Genomic_DNA"/>
</dbReference>
<dbReference type="EMBL" id="U16288">
    <property type="protein sequence ID" value="AAC51351.1"/>
    <property type="status" value="JOINED"/>
    <property type="molecule type" value="Genomic_DNA"/>
</dbReference>
<dbReference type="EMBL" id="U16289">
    <property type="protein sequence ID" value="AAC51351.1"/>
    <property type="status" value="JOINED"/>
    <property type="molecule type" value="Genomic_DNA"/>
</dbReference>
<dbReference type="EMBL" id="U16290">
    <property type="protein sequence ID" value="AAC51351.1"/>
    <property type="status" value="JOINED"/>
    <property type="molecule type" value="Genomic_DNA"/>
</dbReference>
<dbReference type="EMBL" id="U16291">
    <property type="protein sequence ID" value="AAC51351.1"/>
    <property type="status" value="JOINED"/>
    <property type="molecule type" value="Genomic_DNA"/>
</dbReference>
<dbReference type="EMBL" id="U16292">
    <property type="protein sequence ID" value="AAC51351.1"/>
    <property type="status" value="JOINED"/>
    <property type="molecule type" value="Genomic_DNA"/>
</dbReference>
<dbReference type="EMBL" id="AK301696">
    <property type="protein sequence ID" value="BAG63168.1"/>
    <property type="molecule type" value="mRNA"/>
</dbReference>
<dbReference type="EMBL" id="AK312854">
    <property type="protein sequence ID" value="BAG35707.1"/>
    <property type="status" value="ALT_INIT"/>
    <property type="molecule type" value="mRNA"/>
</dbReference>
<dbReference type="EMBL" id="AP001960">
    <property type="status" value="NOT_ANNOTATED_CDS"/>
    <property type="molecule type" value="Genomic_DNA"/>
</dbReference>
<dbReference type="EMBL" id="CH471057">
    <property type="protein sequence ID" value="EAX06101.1"/>
    <property type="molecule type" value="Genomic_DNA"/>
</dbReference>
<dbReference type="EMBL" id="BC131512">
    <property type="protein sequence ID" value="AAI31513.1"/>
    <property type="molecule type" value="mRNA"/>
</dbReference>
<dbReference type="EMBL" id="L33179">
    <property type="protein sequence ID" value="AAA59211.1"/>
    <property type="molecule type" value="mRNA"/>
</dbReference>
<dbReference type="EMBL" id="U09623">
    <property type="protein sequence ID" value="AAA82165.1"/>
    <property type="molecule type" value="mRNA"/>
</dbReference>
<dbReference type="EMBL" id="L47166">
    <property type="protein sequence ID" value="AAB38424.1"/>
    <property type="molecule type" value="Genomic_DNA"/>
</dbReference>
<dbReference type="EMBL" id="S77168">
    <property type="protein sequence ID" value="AAB34478.1"/>
    <property type="molecule type" value="mRNA"/>
</dbReference>
<dbReference type="CCDS" id="CCDS54781.1">
    <molecule id="P40394-2"/>
</dbReference>
<dbReference type="PIR" id="A55878">
    <property type="entry name" value="DEHUAS"/>
</dbReference>
<dbReference type="RefSeq" id="NP_000664.2">
    <property type="nucleotide sequence ID" value="NM_000673.4"/>
</dbReference>
<dbReference type="RefSeq" id="NP_001159976.1">
    <molecule id="P40394-2"/>
    <property type="nucleotide sequence ID" value="NM_001166504.2"/>
</dbReference>
<dbReference type="PDB" id="1AGN">
    <property type="method" value="X-ray"/>
    <property type="resolution" value="3.00 A"/>
    <property type="chains" value="A/B/C/D=14-386"/>
</dbReference>
<dbReference type="PDB" id="1D1S">
    <property type="method" value="X-ray"/>
    <property type="resolution" value="2.50 A"/>
    <property type="chains" value="A/B/C/D=14-386"/>
</dbReference>
<dbReference type="PDB" id="1D1T">
    <property type="method" value="X-ray"/>
    <property type="resolution" value="2.40 A"/>
    <property type="chains" value="A/B/C/D=14-386"/>
</dbReference>
<dbReference type="PDBsum" id="1AGN"/>
<dbReference type="PDBsum" id="1D1S"/>
<dbReference type="PDBsum" id="1D1T"/>
<dbReference type="SMR" id="P40394"/>
<dbReference type="BioGRID" id="106643">
    <property type="interactions" value="13"/>
</dbReference>
<dbReference type="FunCoup" id="P40394">
    <property type="interactions" value="273"/>
</dbReference>
<dbReference type="IntAct" id="P40394">
    <property type="interactions" value="5"/>
</dbReference>
<dbReference type="STRING" id="9606.ENSP00000420269"/>
<dbReference type="BindingDB" id="P40394"/>
<dbReference type="ChEMBL" id="CHEMBL3867"/>
<dbReference type="DrugBank" id="DB00898">
    <property type="generic name" value="Ethanol"/>
</dbReference>
<dbReference type="DrugBank" id="DB00157">
    <property type="generic name" value="NADH"/>
</dbReference>
<dbReference type="SwissLipids" id="SLP:000001879"/>
<dbReference type="iPTMnet" id="P40394"/>
<dbReference type="PhosphoSitePlus" id="P40394"/>
<dbReference type="BioMuta" id="ADH7"/>
<dbReference type="DMDM" id="292495000"/>
<dbReference type="jPOST" id="P40394"/>
<dbReference type="MassIVE" id="P40394"/>
<dbReference type="PaxDb" id="9606-ENSP00000420269"/>
<dbReference type="PeptideAtlas" id="P40394"/>
<dbReference type="PRIDE" id="P40394"/>
<dbReference type="ProteomicsDB" id="55365">
    <molecule id="P40394-1"/>
</dbReference>
<dbReference type="ProteomicsDB" id="55366">
    <molecule id="P40394-2"/>
</dbReference>
<dbReference type="Pumba" id="P40394"/>
<dbReference type="Antibodypedia" id="25891">
    <property type="antibodies" value="363 antibodies from 32 providers"/>
</dbReference>
<dbReference type="DNASU" id="131"/>
<dbReference type="Ensembl" id="ENST00000209665.8">
    <molecule id="P40394-1"/>
    <property type="protein sequence ID" value="ENSP00000209665.4"/>
    <property type="gene ID" value="ENSG00000196344.12"/>
</dbReference>
<dbReference type="Ensembl" id="ENST00000476959.5">
    <molecule id="P40394-2"/>
    <property type="protein sequence ID" value="ENSP00000420269.1"/>
    <property type="gene ID" value="ENSG00000196344.12"/>
</dbReference>
<dbReference type="GeneID" id="131"/>
<dbReference type="KEGG" id="hsa:131"/>
<dbReference type="UCSC" id="uc003huv.2">
    <molecule id="P40394-1"/>
    <property type="organism name" value="human"/>
</dbReference>
<dbReference type="AGR" id="HGNC:256"/>
<dbReference type="CTD" id="131"/>
<dbReference type="DisGeNET" id="131"/>
<dbReference type="GeneCards" id="ADH7"/>
<dbReference type="HGNC" id="HGNC:256">
    <property type="gene designation" value="ADH7"/>
</dbReference>
<dbReference type="HPA" id="ENSG00000196344">
    <property type="expression patterns" value="Tissue enriched (esophagus)"/>
</dbReference>
<dbReference type="MIM" id="600086">
    <property type="type" value="gene"/>
</dbReference>
<dbReference type="neXtProt" id="NX_P40394"/>
<dbReference type="OpenTargets" id="ENSG00000196344"/>
<dbReference type="PharmGKB" id="PA24577"/>
<dbReference type="VEuPathDB" id="HostDB:ENSG00000196344"/>
<dbReference type="eggNOG" id="KOG0022">
    <property type="taxonomic scope" value="Eukaryota"/>
</dbReference>
<dbReference type="GeneTree" id="ENSGT00940000162708"/>
<dbReference type="InParanoid" id="P40394"/>
<dbReference type="OrthoDB" id="417550at2759"/>
<dbReference type="PAN-GO" id="P40394">
    <property type="GO annotations" value="7 GO annotations based on evolutionary models"/>
</dbReference>
<dbReference type="PhylomeDB" id="P40394"/>
<dbReference type="TreeFam" id="TF300429"/>
<dbReference type="PathwayCommons" id="P40394"/>
<dbReference type="Reactome" id="R-HSA-71384">
    <property type="pathway name" value="Ethanol oxidation"/>
</dbReference>
<dbReference type="SignaLink" id="P40394"/>
<dbReference type="BioGRID-ORCS" id="131">
    <property type="hits" value="8 hits in 1151 CRISPR screens"/>
</dbReference>
<dbReference type="EvolutionaryTrace" id="P40394"/>
<dbReference type="GeneWiki" id="ADH7"/>
<dbReference type="GenomeRNAi" id="131"/>
<dbReference type="Pharos" id="P40394">
    <property type="development level" value="Tchem"/>
</dbReference>
<dbReference type="PRO" id="PR:P40394"/>
<dbReference type="Proteomes" id="UP000005640">
    <property type="component" value="Chromosome 4"/>
</dbReference>
<dbReference type="RNAct" id="P40394">
    <property type="molecule type" value="protein"/>
</dbReference>
<dbReference type="Bgee" id="ENSG00000196344">
    <property type="expression patterns" value="Expressed in lower esophagus mucosa and 111 other cell types or tissues"/>
</dbReference>
<dbReference type="ExpressionAtlas" id="P40394">
    <property type="expression patterns" value="baseline and differential"/>
</dbReference>
<dbReference type="GO" id="GO:0005829">
    <property type="term" value="C:cytosol"/>
    <property type="evidence" value="ECO:0000314"/>
    <property type="project" value="HPA"/>
</dbReference>
<dbReference type="GO" id="GO:0005886">
    <property type="term" value="C:plasma membrane"/>
    <property type="evidence" value="ECO:0000314"/>
    <property type="project" value="HPA"/>
</dbReference>
<dbReference type="GO" id="GO:0004022">
    <property type="term" value="F:alcohol dehydrogenase (NAD+) activity"/>
    <property type="evidence" value="ECO:0000314"/>
    <property type="project" value="UniProtKB"/>
</dbReference>
<dbReference type="GO" id="GO:0004031">
    <property type="term" value="F:aldehyde oxidase activity"/>
    <property type="evidence" value="ECO:0000314"/>
    <property type="project" value="UniProtKB"/>
</dbReference>
<dbReference type="GO" id="GO:0004745">
    <property type="term" value="F:all-trans-retinol dehydrogenase (NAD+) activity"/>
    <property type="evidence" value="ECO:0000314"/>
    <property type="project" value="UniProtKB"/>
</dbReference>
<dbReference type="GO" id="GO:0035276">
    <property type="term" value="F:ethanol binding"/>
    <property type="evidence" value="ECO:0000314"/>
    <property type="project" value="UniProtKB"/>
</dbReference>
<dbReference type="GO" id="GO:0050153">
    <property type="term" value="F:omega-hydroxydecanoate dehydrogenase activity"/>
    <property type="evidence" value="ECO:0007669"/>
    <property type="project" value="UniProtKB-EC"/>
</dbReference>
<dbReference type="GO" id="GO:0048019">
    <property type="term" value="F:receptor antagonist activity"/>
    <property type="evidence" value="ECO:0000314"/>
    <property type="project" value="UniProtKB"/>
</dbReference>
<dbReference type="GO" id="GO:0019841">
    <property type="term" value="F:retinol binding"/>
    <property type="evidence" value="ECO:0000314"/>
    <property type="project" value="UniProtKB"/>
</dbReference>
<dbReference type="GO" id="GO:0008270">
    <property type="term" value="F:zinc ion binding"/>
    <property type="evidence" value="ECO:0000318"/>
    <property type="project" value="GO_Central"/>
</dbReference>
<dbReference type="GO" id="GO:0010430">
    <property type="term" value="P:fatty acid omega-oxidation"/>
    <property type="evidence" value="ECO:0000314"/>
    <property type="project" value="UniProtKB"/>
</dbReference>
<dbReference type="GO" id="GO:0009617">
    <property type="term" value="P:response to bacterium"/>
    <property type="evidence" value="ECO:0000314"/>
    <property type="project" value="UniProtKB"/>
</dbReference>
<dbReference type="GO" id="GO:0045471">
    <property type="term" value="P:response to ethanol"/>
    <property type="evidence" value="ECO:0000314"/>
    <property type="project" value="UniProtKB"/>
</dbReference>
<dbReference type="GO" id="GO:0042573">
    <property type="term" value="P:retinoic acid metabolic process"/>
    <property type="evidence" value="ECO:0000318"/>
    <property type="project" value="GO_Central"/>
</dbReference>
<dbReference type="GO" id="GO:0001523">
    <property type="term" value="P:retinoid metabolic process"/>
    <property type="evidence" value="ECO:0000314"/>
    <property type="project" value="UniProtKB"/>
</dbReference>
<dbReference type="GO" id="GO:0042572">
    <property type="term" value="P:retinol metabolic process"/>
    <property type="evidence" value="ECO:0000318"/>
    <property type="project" value="GO_Central"/>
</dbReference>
<dbReference type="CDD" id="cd08299">
    <property type="entry name" value="alcohol_DH_class_I_II_IV"/>
    <property type="match status" value="1"/>
</dbReference>
<dbReference type="FunFam" id="3.40.50.720:FF:001857">
    <property type="entry name" value="Alcohol dehydrogenase class 4 mu/sigma chain"/>
    <property type="match status" value="1"/>
</dbReference>
<dbReference type="FunFam" id="3.90.180.10:FF:000001">
    <property type="entry name" value="S-(hydroxymethyl)glutathione dehydrogenase"/>
    <property type="match status" value="1"/>
</dbReference>
<dbReference type="Gene3D" id="3.90.180.10">
    <property type="entry name" value="Medium-chain alcohol dehydrogenases, catalytic domain"/>
    <property type="match status" value="1"/>
</dbReference>
<dbReference type="Gene3D" id="3.40.50.720">
    <property type="entry name" value="NAD(P)-binding Rossmann-like Domain"/>
    <property type="match status" value="1"/>
</dbReference>
<dbReference type="InterPro" id="IPR013149">
    <property type="entry name" value="ADH-like_C"/>
</dbReference>
<dbReference type="InterPro" id="IPR013154">
    <property type="entry name" value="ADH-like_N"/>
</dbReference>
<dbReference type="InterPro" id="IPR002328">
    <property type="entry name" value="ADH_Zn_CS"/>
</dbReference>
<dbReference type="InterPro" id="IPR011032">
    <property type="entry name" value="GroES-like_sf"/>
</dbReference>
<dbReference type="InterPro" id="IPR036291">
    <property type="entry name" value="NAD(P)-bd_dom_sf"/>
</dbReference>
<dbReference type="PANTHER" id="PTHR43880">
    <property type="entry name" value="ALCOHOL DEHYDROGENASE"/>
    <property type="match status" value="1"/>
</dbReference>
<dbReference type="PANTHER" id="PTHR43880:SF2">
    <property type="entry name" value="ALL-TRANS-RETINOL DEHYDROGENASE [NAD(+)] ADH7"/>
    <property type="match status" value="1"/>
</dbReference>
<dbReference type="Pfam" id="PF08240">
    <property type="entry name" value="ADH_N"/>
    <property type="match status" value="1"/>
</dbReference>
<dbReference type="Pfam" id="PF00107">
    <property type="entry name" value="ADH_zinc_N"/>
    <property type="match status" value="1"/>
</dbReference>
<dbReference type="SUPFAM" id="SSF50129">
    <property type="entry name" value="GroES-like"/>
    <property type="match status" value="2"/>
</dbReference>
<dbReference type="SUPFAM" id="SSF51735">
    <property type="entry name" value="NAD(P)-binding Rossmann-fold domains"/>
    <property type="match status" value="1"/>
</dbReference>
<dbReference type="PROSITE" id="PS00059">
    <property type="entry name" value="ADH_ZINC"/>
    <property type="match status" value="1"/>
</dbReference>